<reference key="1">
    <citation type="journal article" date="1992" name="J. Bacteriol.">
        <title>Discovery and characterization of a new transposable element, Tn4811, in Streptomyces lividans 66.</title>
        <authorList>
            <person name="Chen C.W."/>
            <person name="Yu T.-W."/>
            <person name="Chung H.-M."/>
            <person name="Chou C.-F."/>
        </authorList>
    </citation>
    <scope>NUCLEOTIDE SEQUENCE [GENOMIC DNA]</scope>
    <source>
        <strain>66 / 1326</strain>
        <transposon>Tn4811</transposon>
    </source>
</reference>
<comment type="similarity">
    <text evidence="3">Belongs to the short-chain dehydrogenases/reductases (SDR) family.</text>
</comment>
<sequence>MDLTGRRAVVTGGASGLGAETVRALAAAGAEVTIATRHPQSAEPLVQEAAAAGAGRVHAEALDLSDVASVDSFARAWRGPLDILVANAGIMALPTRTLTPYGWEMQLATNYLGHFALATGLHAALRDAGSARIVVVSSGAHLGTPFDFEDPHFARRPYDPWAAYGNSKTADVLFTVGARRWAADGITANALNPGYILTRLQRHVDDETMRAFGVMDDQGNVKPLPYYKTPEQGAATSVLLAASPLLNGVTGRYFEDNQEARTVEDGDVQPGGVAAHALDPEAADRLWEYGADTLSAG</sequence>
<organism>
    <name type="scientific">Streptomyces lividans</name>
    <dbReference type="NCBI Taxonomy" id="1916"/>
    <lineage>
        <taxon>Bacteria</taxon>
        <taxon>Bacillati</taxon>
        <taxon>Actinomycetota</taxon>
        <taxon>Actinomycetes</taxon>
        <taxon>Kitasatosporales</taxon>
        <taxon>Streptomycetaceae</taxon>
        <taxon>Streptomyces</taxon>
    </lineage>
</organism>
<proteinExistence type="inferred from homology"/>
<dbReference type="EC" id="1.-.-.-"/>
<dbReference type="SMR" id="P35320"/>
<dbReference type="GO" id="GO:0016491">
    <property type="term" value="F:oxidoreductase activity"/>
    <property type="evidence" value="ECO:0007669"/>
    <property type="project" value="UniProtKB-KW"/>
</dbReference>
<dbReference type="CDD" id="cd05327">
    <property type="entry name" value="retinol-DH_like_SDR_c_like"/>
    <property type="match status" value="1"/>
</dbReference>
<dbReference type="FunFam" id="3.40.50.720:FF:000594">
    <property type="entry name" value="Short-chain oxidoreductase"/>
    <property type="match status" value="1"/>
</dbReference>
<dbReference type="Gene3D" id="3.40.50.720">
    <property type="entry name" value="NAD(P)-binding Rossmann-like Domain"/>
    <property type="match status" value="1"/>
</dbReference>
<dbReference type="InterPro" id="IPR036291">
    <property type="entry name" value="NAD(P)-bd_dom_sf"/>
</dbReference>
<dbReference type="InterPro" id="IPR020904">
    <property type="entry name" value="Sc_DH/Rdtase_CS"/>
</dbReference>
<dbReference type="InterPro" id="IPR002347">
    <property type="entry name" value="SDR_fam"/>
</dbReference>
<dbReference type="PANTHER" id="PTHR24320:SF148">
    <property type="entry name" value="NAD(P)-BINDING ROSSMANN-FOLD SUPERFAMILY PROTEIN"/>
    <property type="match status" value="1"/>
</dbReference>
<dbReference type="PANTHER" id="PTHR24320">
    <property type="entry name" value="RETINOL DEHYDROGENASE"/>
    <property type="match status" value="1"/>
</dbReference>
<dbReference type="Pfam" id="PF00106">
    <property type="entry name" value="adh_short"/>
    <property type="match status" value="1"/>
</dbReference>
<dbReference type="PRINTS" id="PR00081">
    <property type="entry name" value="GDHRDH"/>
</dbReference>
<dbReference type="SUPFAM" id="SSF51735">
    <property type="entry name" value="NAD(P)-binding Rossmann-fold domains"/>
    <property type="match status" value="1"/>
</dbReference>
<dbReference type="PROSITE" id="PS00061">
    <property type="entry name" value="ADH_SHORT"/>
    <property type="match status" value="1"/>
</dbReference>
<feature type="chain" id="PRO_0000054738" description="Probable oxidoreductase">
    <location>
        <begin position="1"/>
        <end position="297"/>
    </location>
</feature>
<feature type="active site" description="Proton acceptor" evidence="2">
    <location>
        <position position="164"/>
    </location>
</feature>
<feature type="binding site" evidence="1">
    <location>
        <begin position="9"/>
        <end position="33"/>
    </location>
    <ligand>
        <name>NAD(+)</name>
        <dbReference type="ChEBI" id="CHEBI:57540"/>
    </ligand>
</feature>
<feature type="binding site" evidence="1">
    <location>
        <position position="138"/>
    </location>
    <ligand>
        <name>substrate</name>
    </ligand>
</feature>
<accession>P35320</accession>
<name>OXIR_STRLI</name>
<keyword id="KW-0560">Oxidoreductase</keyword>
<evidence type="ECO:0000250" key="1"/>
<evidence type="ECO:0000255" key="2">
    <source>
        <dbReference type="PROSITE-ProRule" id="PRU10001"/>
    </source>
</evidence>
<evidence type="ECO:0000305" key="3"/>
<protein>
    <recommendedName>
        <fullName>Probable oxidoreductase</fullName>
        <ecNumber>1.-.-.-</ecNumber>
    </recommendedName>
</protein>